<organism>
    <name type="scientific">Homo sapiens</name>
    <name type="common">Human</name>
    <dbReference type="NCBI Taxonomy" id="9606"/>
    <lineage>
        <taxon>Eukaryota</taxon>
        <taxon>Metazoa</taxon>
        <taxon>Chordata</taxon>
        <taxon>Craniata</taxon>
        <taxon>Vertebrata</taxon>
        <taxon>Euteleostomi</taxon>
        <taxon>Mammalia</taxon>
        <taxon>Eutheria</taxon>
        <taxon>Euarchontoglires</taxon>
        <taxon>Primates</taxon>
        <taxon>Haplorrhini</taxon>
        <taxon>Catarrhini</taxon>
        <taxon>Hominidae</taxon>
        <taxon>Homo</taxon>
    </lineage>
</organism>
<proteinExistence type="evidence at protein level"/>
<dbReference type="EC" id="2.3.2.23" evidence="7"/>
<dbReference type="EMBL" id="AB017644">
    <property type="protein sequence ID" value="BAA76544.1"/>
    <property type="molecule type" value="mRNA"/>
</dbReference>
<dbReference type="EMBL" id="AF085362">
    <property type="protein sequence ID" value="AAD40197.1"/>
    <property type="molecule type" value="mRNA"/>
</dbReference>
<dbReference type="EMBL" id="AF136176">
    <property type="protein sequence ID" value="AAP97266.1"/>
    <property type="molecule type" value="mRNA"/>
</dbReference>
<dbReference type="EMBL" id="BT019345">
    <property type="protein sequence ID" value="AAV38152.1"/>
    <property type="molecule type" value="mRNA"/>
</dbReference>
<dbReference type="EMBL" id="AK314145">
    <property type="protein sequence ID" value="BAG36833.1"/>
    <property type="molecule type" value="mRNA"/>
</dbReference>
<dbReference type="EMBL" id="AC104076">
    <property type="protein sequence ID" value="AAY14882.1"/>
    <property type="molecule type" value="Genomic_DNA"/>
</dbReference>
<dbReference type="EMBL" id="CH471058">
    <property type="protein sequence ID" value="EAX10989.1"/>
    <property type="molecule type" value="Genomic_DNA"/>
</dbReference>
<dbReference type="EMBL" id="CH471058">
    <property type="protein sequence ID" value="EAX10990.1"/>
    <property type="molecule type" value="Genomic_DNA"/>
</dbReference>
<dbReference type="EMBL" id="BC003554">
    <property type="protein sequence ID" value="AAH03554.1"/>
    <property type="molecule type" value="mRNA"/>
</dbReference>
<dbReference type="EMBL" id="BC092407">
    <property type="protein sequence ID" value="AAH92407.1"/>
    <property type="molecule type" value="mRNA"/>
</dbReference>
<dbReference type="CCDS" id="CCDS2282.1"/>
<dbReference type="RefSeq" id="NP_001265483.1">
    <property type="nucleotide sequence ID" value="NM_001278554.2"/>
</dbReference>
<dbReference type="RefSeq" id="NP_001265484.1">
    <property type="nucleotide sequence ID" value="NM_001278555.2"/>
</dbReference>
<dbReference type="RefSeq" id="NP_006348.1">
    <property type="nucleotide sequence ID" value="NM_006357.4"/>
</dbReference>
<dbReference type="RefSeq" id="NP_872619.1">
    <property type="nucleotide sequence ID" value="NM_182678.3"/>
</dbReference>
<dbReference type="RefSeq" id="XP_005246301.1">
    <property type="nucleotide sequence ID" value="XM_005246244.3"/>
</dbReference>
<dbReference type="RefSeq" id="XP_054196155.1">
    <property type="nucleotide sequence ID" value="XM_054340180.1"/>
</dbReference>
<dbReference type="SMR" id="Q969T4"/>
<dbReference type="BioGRID" id="115740">
    <property type="interactions" value="139"/>
</dbReference>
<dbReference type="FunCoup" id="Q969T4">
    <property type="interactions" value="3918"/>
</dbReference>
<dbReference type="IntAct" id="Q969T4">
    <property type="interactions" value="91"/>
</dbReference>
<dbReference type="MINT" id="Q969T4"/>
<dbReference type="STRING" id="9606.ENSP00000473623"/>
<dbReference type="MoonDB" id="Q969T4">
    <property type="type" value="Predicted"/>
</dbReference>
<dbReference type="iPTMnet" id="Q969T4"/>
<dbReference type="PhosphoSitePlus" id="Q969T4"/>
<dbReference type="SwissPalm" id="Q969T4"/>
<dbReference type="BioMuta" id="UBE2E3"/>
<dbReference type="DMDM" id="47606197"/>
<dbReference type="jPOST" id="Q969T4"/>
<dbReference type="MassIVE" id="Q969T4"/>
<dbReference type="PaxDb" id="9606-ENSP00000386788"/>
<dbReference type="PeptideAtlas" id="Q969T4"/>
<dbReference type="ProteomicsDB" id="75843"/>
<dbReference type="Pumba" id="Q969T4"/>
<dbReference type="TopDownProteomics" id="Q969T4"/>
<dbReference type="Antibodypedia" id="1150">
    <property type="antibodies" value="676 antibodies from 32 providers"/>
</dbReference>
<dbReference type="DNASU" id="10477"/>
<dbReference type="Ensembl" id="ENST00000392415.6">
    <property type="protein sequence ID" value="ENSP00000376215.2"/>
    <property type="gene ID" value="ENSG00000170035.16"/>
</dbReference>
<dbReference type="Ensembl" id="ENST00000410062.9">
    <property type="protein sequence ID" value="ENSP00000386788.3"/>
    <property type="gene ID" value="ENSG00000170035.16"/>
</dbReference>
<dbReference type="Ensembl" id="ENST00000602710.5">
    <property type="protein sequence ID" value="ENSP00000473623.1"/>
    <property type="gene ID" value="ENSG00000170035.16"/>
</dbReference>
<dbReference type="Ensembl" id="ENST00000602959.5">
    <property type="protein sequence ID" value="ENSP00000473639.1"/>
    <property type="gene ID" value="ENSG00000170035.16"/>
</dbReference>
<dbReference type="GeneID" id="10477"/>
<dbReference type="KEGG" id="hsa:10477"/>
<dbReference type="MANE-Select" id="ENST00000410062.9">
    <property type="protein sequence ID" value="ENSP00000386788.3"/>
    <property type="RefSeq nucleotide sequence ID" value="NM_006357.4"/>
    <property type="RefSeq protein sequence ID" value="NP_006348.1"/>
</dbReference>
<dbReference type="UCSC" id="uc002unr.3">
    <property type="organism name" value="human"/>
</dbReference>
<dbReference type="AGR" id="HGNC:12479"/>
<dbReference type="CTD" id="10477"/>
<dbReference type="DisGeNET" id="10477"/>
<dbReference type="GeneCards" id="UBE2E3"/>
<dbReference type="HGNC" id="HGNC:12479">
    <property type="gene designation" value="UBE2E3"/>
</dbReference>
<dbReference type="HPA" id="ENSG00000170035">
    <property type="expression patterns" value="Low tissue specificity"/>
</dbReference>
<dbReference type="MIM" id="604151">
    <property type="type" value="gene"/>
</dbReference>
<dbReference type="neXtProt" id="NX_Q969T4"/>
<dbReference type="OpenTargets" id="ENSG00000170035"/>
<dbReference type="PharmGKB" id="PA37129"/>
<dbReference type="VEuPathDB" id="HostDB:ENSG00000170035"/>
<dbReference type="eggNOG" id="KOG0417">
    <property type="taxonomic scope" value="Eukaryota"/>
</dbReference>
<dbReference type="GeneTree" id="ENSGT00940000155392"/>
<dbReference type="HOGENOM" id="CLU_030988_14_4_1"/>
<dbReference type="InParanoid" id="Q969T4"/>
<dbReference type="OMA" id="NRGEHDR"/>
<dbReference type="OrthoDB" id="7851174at2759"/>
<dbReference type="PAN-GO" id="Q969T4">
    <property type="GO annotations" value="5 GO annotations based on evolutionary models"/>
</dbReference>
<dbReference type="PhylomeDB" id="Q969T4"/>
<dbReference type="TreeFam" id="TF101117"/>
<dbReference type="BRENDA" id="2.3.2.23">
    <property type="organism ID" value="2681"/>
</dbReference>
<dbReference type="BRENDA" id="2.3.2.24">
    <property type="organism ID" value="2681"/>
</dbReference>
<dbReference type="PathwayCommons" id="Q969T4"/>
<dbReference type="Reactome" id="R-HSA-8866652">
    <property type="pathway name" value="Synthesis of active ubiquitin: roles of E1 and E2 enzymes"/>
</dbReference>
<dbReference type="Reactome" id="R-HSA-983168">
    <property type="pathway name" value="Antigen processing: Ubiquitination &amp; Proteasome degradation"/>
</dbReference>
<dbReference type="SignaLink" id="Q969T4"/>
<dbReference type="SIGNOR" id="Q969T4"/>
<dbReference type="UniPathway" id="UPA00143"/>
<dbReference type="BioGRID-ORCS" id="10477">
    <property type="hits" value="11 hits in 1129 CRISPR screens"/>
</dbReference>
<dbReference type="ChiTaRS" id="UBE2E3">
    <property type="organism name" value="human"/>
</dbReference>
<dbReference type="GeneWiki" id="UBE2E3"/>
<dbReference type="GenomeRNAi" id="10477"/>
<dbReference type="Pharos" id="Q969T4">
    <property type="development level" value="Tbio"/>
</dbReference>
<dbReference type="PRO" id="PR:Q969T4"/>
<dbReference type="Proteomes" id="UP000005640">
    <property type="component" value="Chromosome 2"/>
</dbReference>
<dbReference type="RNAct" id="Q969T4">
    <property type="molecule type" value="protein"/>
</dbReference>
<dbReference type="Bgee" id="ENSG00000170035">
    <property type="expression patterns" value="Expressed in ganglionic eminence and 102 other cell types or tissues"/>
</dbReference>
<dbReference type="ExpressionAtlas" id="Q969T4">
    <property type="expression patterns" value="baseline and differential"/>
</dbReference>
<dbReference type="GO" id="GO:0005829">
    <property type="term" value="C:cytosol"/>
    <property type="evidence" value="ECO:0000304"/>
    <property type="project" value="Reactome"/>
</dbReference>
<dbReference type="GO" id="GO:0005654">
    <property type="term" value="C:nucleoplasm"/>
    <property type="evidence" value="ECO:0000304"/>
    <property type="project" value="Reactome"/>
</dbReference>
<dbReference type="GO" id="GO:0005634">
    <property type="term" value="C:nucleus"/>
    <property type="evidence" value="ECO:0000318"/>
    <property type="project" value="GO_Central"/>
</dbReference>
<dbReference type="GO" id="GO:0005524">
    <property type="term" value="F:ATP binding"/>
    <property type="evidence" value="ECO:0007669"/>
    <property type="project" value="UniProtKB-KW"/>
</dbReference>
<dbReference type="GO" id="GO:0061631">
    <property type="term" value="F:ubiquitin conjugating enzyme activity"/>
    <property type="evidence" value="ECO:0000314"/>
    <property type="project" value="UniProt"/>
</dbReference>
<dbReference type="GO" id="GO:0004842">
    <property type="term" value="F:ubiquitin-protein transferase activity"/>
    <property type="evidence" value="ECO:0000314"/>
    <property type="project" value="UniProtKB"/>
</dbReference>
<dbReference type="GO" id="GO:0070979">
    <property type="term" value="P:protein K11-linked ubiquitination"/>
    <property type="evidence" value="ECO:0000314"/>
    <property type="project" value="UniProtKB"/>
</dbReference>
<dbReference type="GO" id="GO:0070936">
    <property type="term" value="P:protein K48-linked ubiquitination"/>
    <property type="evidence" value="ECO:0000314"/>
    <property type="project" value="UniProtKB"/>
</dbReference>
<dbReference type="GO" id="GO:0070534">
    <property type="term" value="P:protein K63-linked ubiquitination"/>
    <property type="evidence" value="ECO:0000314"/>
    <property type="project" value="UniProtKB"/>
</dbReference>
<dbReference type="GO" id="GO:0006513">
    <property type="term" value="P:protein monoubiquitination"/>
    <property type="evidence" value="ECO:0000314"/>
    <property type="project" value="UniProt"/>
</dbReference>
<dbReference type="CDD" id="cd23793">
    <property type="entry name" value="UBCc_UBE2E"/>
    <property type="match status" value="1"/>
</dbReference>
<dbReference type="FunFam" id="3.10.110.10:FF:000003">
    <property type="entry name" value="Ubiquitin-conjugating enzyme E2 E3"/>
    <property type="match status" value="1"/>
</dbReference>
<dbReference type="Gene3D" id="3.10.110.10">
    <property type="entry name" value="Ubiquitin Conjugating Enzyme"/>
    <property type="match status" value="1"/>
</dbReference>
<dbReference type="InterPro" id="IPR000608">
    <property type="entry name" value="UBQ-conjugat_E2_core"/>
</dbReference>
<dbReference type="InterPro" id="IPR023313">
    <property type="entry name" value="UBQ-conjugating_AS"/>
</dbReference>
<dbReference type="InterPro" id="IPR016135">
    <property type="entry name" value="UBQ-conjugating_enzyme/RWD"/>
</dbReference>
<dbReference type="PANTHER" id="PTHR24068">
    <property type="entry name" value="UBIQUITIN-CONJUGATING ENZYME E2"/>
    <property type="match status" value="1"/>
</dbReference>
<dbReference type="Pfam" id="PF00179">
    <property type="entry name" value="UQ_con"/>
    <property type="match status" value="1"/>
</dbReference>
<dbReference type="SMART" id="SM00212">
    <property type="entry name" value="UBCc"/>
    <property type="match status" value="1"/>
</dbReference>
<dbReference type="SUPFAM" id="SSF54495">
    <property type="entry name" value="UBC-like"/>
    <property type="match status" value="1"/>
</dbReference>
<dbReference type="PROSITE" id="PS00183">
    <property type="entry name" value="UBC_1"/>
    <property type="match status" value="1"/>
</dbReference>
<dbReference type="PROSITE" id="PS50127">
    <property type="entry name" value="UBC_2"/>
    <property type="match status" value="1"/>
</dbReference>
<comment type="function">
    <text evidence="5 7 8">Accepts ubiquitin from the E1 complex and catalyzes its covalent attachment to other proteins. In vitro catalyzes 'Lys-11'- and 'Lys-48'-, as well as 'Lys-63'-linked polyubiquitination. Participates in the regulation of transepithelial sodium transport in renal cells.</text>
</comment>
<comment type="catalytic activity">
    <reaction evidence="2 3 7">
        <text>S-ubiquitinyl-[E1 ubiquitin-activating enzyme]-L-cysteine + [E2 ubiquitin-conjugating enzyme]-L-cysteine = [E1 ubiquitin-activating enzyme]-L-cysteine + S-ubiquitinyl-[E2 ubiquitin-conjugating enzyme]-L-cysteine.</text>
        <dbReference type="EC" id="2.3.2.23"/>
    </reaction>
</comment>
<comment type="pathway">
    <text evidence="2">Protein modification; protein ubiquitination.</text>
</comment>
<comment type="subunit">
    <text evidence="1">The ubiquitin-loaded form interacts specifically with importin-11 (IPO11), leading to its import into the nucleus. Interacts with NEDD4L.</text>
</comment>
<comment type="interaction">
    <interactant intactId="EBI-348496">
        <id>Q969T4</id>
    </interactant>
    <interactant intactId="EBI-2875665">
        <id>Q96B67</id>
        <label>ARRDC3</label>
    </interactant>
    <organismsDiffer>false</organismsDiffer>
    <experiments>7</experiments>
</comment>
<comment type="interaction">
    <interactant intactId="EBI-348496">
        <id>Q969T4</id>
    </interactant>
    <interactant intactId="EBI-930964">
        <id>P54253</id>
        <label>ATXN1</label>
    </interactant>
    <organismsDiffer>false</organismsDiffer>
    <experiments>7</experiments>
</comment>
<comment type="interaction">
    <interactant intactId="EBI-348496">
        <id>Q969T4</id>
    </interactant>
    <interactant intactId="EBI-12344389">
        <id>Q96EP1-2</id>
        <label>CHFR</label>
    </interactant>
    <organismsDiffer>false</organismsDiffer>
    <experiments>3</experiments>
</comment>
<comment type="interaction">
    <interactant intactId="EBI-348496">
        <id>Q969T4</id>
    </interactant>
    <interactant intactId="EBI-724310">
        <id>Q15038</id>
        <label>DAZAP2</label>
    </interactant>
    <organismsDiffer>false</organismsDiffer>
    <experiments>3</experiments>
</comment>
<comment type="interaction">
    <interactant intactId="EBI-348496">
        <id>Q969T4</id>
    </interactant>
    <interactant intactId="EBI-352682">
        <id>P04792</id>
        <label>HSPB1</label>
    </interactant>
    <organismsDiffer>false</organismsDiffer>
    <experiments>3</experiments>
</comment>
<comment type="interaction">
    <interactant intactId="EBI-348496">
        <id>Q969T4</id>
    </interactant>
    <interactant intactId="EBI-10975473">
        <id>O60333-2</id>
        <label>KIF1B</label>
    </interactant>
    <organismsDiffer>false</organismsDiffer>
    <experiments>3</experiments>
</comment>
<comment type="interaction">
    <interactant intactId="EBI-348496">
        <id>Q969T4</id>
    </interactant>
    <interactant intactId="EBI-2340316">
        <id>O15344</id>
        <label>MID1</label>
    </interactant>
    <organismsDiffer>false</organismsDiffer>
    <experiments>8</experiments>
</comment>
<comment type="interaction">
    <interactant intactId="EBI-348496">
        <id>Q969T4</id>
    </interactant>
    <interactant intactId="EBI-10172526">
        <id>Q9UJV3-2</id>
        <label>MID2</label>
    </interactant>
    <organismsDiffer>false</organismsDiffer>
    <experiments>3</experiments>
</comment>
<comment type="interaction">
    <interactant intactId="EBI-348496">
        <id>Q969T4</id>
    </interactant>
    <interactant intactId="EBI-1058491">
        <id>Q96FW1</id>
        <label>OTUB1</label>
    </interactant>
    <organismsDiffer>false</organismsDiffer>
    <experiments>10</experiments>
</comment>
<comment type="interaction">
    <interactant intactId="EBI-348496">
        <id>Q969T4</id>
    </interactant>
    <interactant intactId="EBI-12813581">
        <id>Q9NXJ5-2</id>
        <label>PGPEP1</label>
    </interactant>
    <organismsDiffer>false</organismsDiffer>
    <experiments>5</experiments>
</comment>
<comment type="interaction">
    <interactant intactId="EBI-348496">
        <id>Q969T4</id>
    </interactant>
    <interactant intactId="EBI-79165">
        <id>Q9NRD5</id>
        <label>PICK1</label>
    </interactant>
    <organismsDiffer>false</organismsDiffer>
    <experiments>3</experiments>
</comment>
<comment type="interaction">
    <interactant intactId="EBI-348496">
        <id>Q969T4</id>
    </interactant>
    <interactant intactId="EBI-749195">
        <id>P60891</id>
        <label>PRPS1</label>
    </interactant>
    <organismsDiffer>false</organismsDiffer>
    <experiments>3</experiments>
</comment>
<comment type="interaction">
    <interactant intactId="EBI-348496">
        <id>Q969T4</id>
    </interactant>
    <interactant intactId="EBI-714023">
        <id>Q8N5U6</id>
        <label>RNF10</label>
    </interactant>
    <organismsDiffer>false</organismsDiffer>
    <experiments>3</experiments>
</comment>
<comment type="interaction">
    <interactant intactId="EBI-348496">
        <id>Q969T4</id>
    </interactant>
    <interactant intactId="EBI-396669">
        <id>Q9Y3C5</id>
        <label>RNF11</label>
    </interactant>
    <organismsDiffer>false</organismsDiffer>
    <experiments>4</experiments>
</comment>
<comment type="interaction">
    <interactant intactId="EBI-348496">
        <id>Q969T4</id>
    </interactant>
    <interactant intactId="EBI-2129242">
        <id>Q9Y4L5</id>
        <label>RNF115</label>
    </interactant>
    <organismsDiffer>false</organismsDiffer>
    <experiments>4</experiments>
</comment>
<comment type="interaction">
    <interactant intactId="EBI-348496">
        <id>Q969T4</id>
    </interactant>
    <interactant intactId="EBI-2340249">
        <id>Q96GF1</id>
        <label>RNF185</label>
    </interactant>
    <organismsDiffer>false</organismsDiffer>
    <experiments>8</experiments>
</comment>
<comment type="interaction">
    <interactant intactId="EBI-348496">
        <id>Q969T4</id>
    </interactant>
    <interactant intactId="EBI-722416">
        <id>Q99496</id>
        <label>RNF2</label>
    </interactant>
    <organismsDiffer>false</organismsDiffer>
    <experiments>6</experiments>
</comment>
<comment type="interaction">
    <interactant intactId="EBI-348496">
        <id>Q969T4</id>
    </interactant>
    <interactant intactId="EBI-949963">
        <id>Q5VTB9</id>
        <label>RNF220</label>
    </interactant>
    <organismsDiffer>false</organismsDiffer>
    <experiments>3</experiments>
</comment>
<comment type="interaction">
    <interactant intactId="EBI-348496">
        <id>Q969T4</id>
    </interactant>
    <interactant intactId="EBI-2129220">
        <id>Q96BH1</id>
        <label>RNF25</label>
    </interactant>
    <organismsDiffer>false</organismsDiffer>
    <experiments>7</experiments>
</comment>
<comment type="interaction">
    <interactant intactId="EBI-348496">
        <id>Q969T4</id>
    </interactant>
    <interactant intactId="EBI-348482">
        <id>Q99942</id>
        <label>RNF5</label>
    </interactant>
    <organismsDiffer>false</organismsDiffer>
    <experiments>11</experiments>
</comment>
<comment type="interaction">
    <interactant intactId="EBI-348496">
        <id>Q969T4</id>
    </interactant>
    <interactant intactId="EBI-739510">
        <id>Q9HCM9</id>
        <label>TRIM39</label>
    </interactant>
    <organismsDiffer>false</organismsDiffer>
    <experiments>5</experiments>
</comment>
<comment type="interaction">
    <interactant intactId="EBI-348496">
        <id>Q969T4</id>
    </interactant>
    <interactant intactId="EBI-11523450">
        <id>Q9HCM9-2</id>
        <label>TRIM39</label>
    </interactant>
    <organismsDiffer>false</organismsDiffer>
    <experiments>3</experiments>
</comment>
<comment type="interaction">
    <interactant intactId="EBI-348496">
        <id>Q969T4</id>
    </interactant>
    <interactant intactId="EBI-9867283">
        <id>Q86XT4</id>
        <label>TRIM50</label>
    </interactant>
    <organismsDiffer>false</organismsDiffer>
    <experiments>3</experiments>
</comment>
<comment type="interaction">
    <interactant intactId="EBI-348496">
        <id>Q969T4</id>
    </interactant>
    <interactant intactId="EBI-6929619">
        <id>Q9BVG3</id>
        <label>TRIM62</label>
    </interactant>
    <organismsDiffer>false</organismsDiffer>
    <experiments>3</experiments>
</comment>
<comment type="interaction">
    <interactant intactId="EBI-348496">
        <id>Q969T4</id>
    </interactant>
    <interactant intactId="EBI-711909">
        <id>P02766</id>
        <label>TTR</label>
    </interactant>
    <organismsDiffer>false</organismsDiffer>
    <experiments>3</experiments>
</comment>
<comment type="interaction">
    <interactant intactId="EBI-348496">
        <id>Q969T4</id>
    </interactant>
    <interactant intactId="EBI-727055">
        <id>Q969T9</id>
        <label>WBP2</label>
    </interactant>
    <organismsDiffer>false</organismsDiffer>
    <experiments>3</experiments>
</comment>
<comment type="interaction">
    <interactant intactId="EBI-348496">
        <id>Q969T4</id>
    </interactant>
    <interactant intactId="EBI-720609">
        <id>O76024</id>
        <label>WFS1</label>
    </interactant>
    <organismsDiffer>false</organismsDiffer>
    <experiments>3</experiments>
</comment>
<comment type="interaction">
    <interactant intactId="EBI-348496">
        <id>Q969T4</id>
    </interactant>
    <interactant intactId="EBI-743923">
        <id>O00308</id>
        <label>WWP2</label>
    </interactant>
    <organismsDiffer>false</organismsDiffer>
    <experiments>3</experiments>
</comment>
<comment type="subcellular location">
    <subcellularLocation>
        <location evidence="6">Nucleus</location>
    </subcellularLocation>
    <subcellularLocation>
        <location evidence="6">Cytoplasm</location>
    </subcellularLocation>
    <text>Shuttles between the nucleus and cytoplasm in a IPO11-dependent manner.</text>
</comment>
<comment type="tissue specificity">
    <text evidence="5">Ubiquitously expressed at low levels. Highly expressed in skeletal muscle.</text>
</comment>
<comment type="similarity">
    <text evidence="2">Belongs to the ubiquitin-conjugating enzyme family.</text>
</comment>
<name>UB2E3_HUMAN</name>
<evidence type="ECO:0000250" key="1">
    <source>
        <dbReference type="UniProtKB" id="P52483"/>
    </source>
</evidence>
<evidence type="ECO:0000255" key="2">
    <source>
        <dbReference type="PROSITE-ProRule" id="PRU00388"/>
    </source>
</evidence>
<evidence type="ECO:0000255" key="3">
    <source>
        <dbReference type="PROSITE-ProRule" id="PRU10133"/>
    </source>
</evidence>
<evidence type="ECO:0000256" key="4">
    <source>
        <dbReference type="SAM" id="MobiDB-lite"/>
    </source>
</evidence>
<evidence type="ECO:0000269" key="5">
    <source>
    </source>
</evidence>
<evidence type="ECO:0000269" key="6">
    <source>
    </source>
</evidence>
<evidence type="ECO:0000269" key="7">
    <source>
    </source>
</evidence>
<evidence type="ECO:0000269" key="8">
    <source>
    </source>
</evidence>
<evidence type="ECO:0000269" key="9">
    <source ref="3"/>
</evidence>
<evidence type="ECO:0000305" key="10"/>
<evidence type="ECO:0000312" key="11">
    <source>
        <dbReference type="HGNC" id="HGNC:12479"/>
    </source>
</evidence>
<evidence type="ECO:0007744" key="12">
    <source>
    </source>
</evidence>
<evidence type="ECO:0007744" key="13">
    <source>
    </source>
</evidence>
<protein>
    <recommendedName>
        <fullName>Ubiquitin-conjugating enzyme E2 E3</fullName>
        <ecNumber evidence="7">2.3.2.23</ecNumber>
    </recommendedName>
    <alternativeName>
        <fullName>E2 ubiquitin-conjugating enzyme E3</fullName>
    </alternativeName>
    <alternativeName>
        <fullName>UbcH9</fullName>
    </alternativeName>
    <alternativeName>
        <fullName>Ubiquitin carrier protein E3</fullName>
    </alternativeName>
    <alternativeName>
        <fullName>Ubiquitin-conjugating enzyme E2-23 kDa</fullName>
    </alternativeName>
    <alternativeName>
        <fullName>Ubiquitin-protein ligase E3</fullName>
    </alternativeName>
</protein>
<reference key="1">
    <citation type="journal article" date="1999" name="Cytogenet. Cell Genet.">
        <title>cDNA cloning, characterization, and chromosome mapping of UBE2E3 (alias UbcH9), encoding an N-terminally extended human ubiquitin-conjugating enzyme.</title>
        <authorList>
            <person name="Ito K."/>
            <person name="Kato S."/>
            <person name="Matsuda Y."/>
            <person name="Kimura M."/>
            <person name="Okano Y."/>
        </authorList>
    </citation>
    <scope>NUCLEOTIDE SEQUENCE [MRNA]</scope>
    <scope>TISSUE SPECIFICITY</scope>
    <scope>FUNCTION</scope>
    <scope>MUTAGENESIS OF CYS-145</scope>
    <source>
        <tissue>Gastric adenocarcinoma</tissue>
    </source>
</reference>
<reference key="2">
    <citation type="submission" date="1998-08" db="EMBL/GenBank/DDBJ databases">
        <title>Human UbcM2 gene, complete cds.</title>
        <authorList>
            <person name="Shen Y."/>
            <person name="Ye M."/>
            <person name="Fu G."/>
            <person name="Zhou J."/>
            <person name="Zhang Q."/>
            <person name="Huang Q."/>
            <person name="Xu S."/>
            <person name="He K."/>
            <person name="Chen S."/>
            <person name="Mao M."/>
            <person name="Chen Z."/>
        </authorList>
    </citation>
    <scope>NUCLEOTIDE SEQUENCE [MRNA]</scope>
    <source>
        <tissue>Umbilical cord blood</tissue>
    </source>
</reference>
<reference key="3">
    <citation type="submission" date="1999-03" db="EMBL/GenBank/DDBJ databases">
        <title>Cloning of a new human cDNA homologous to Mus musculus ubiquitin-conjugating enzyme UbcM2.</title>
        <authorList>
            <person name="Xin Y.R."/>
            <person name="Yu L."/>
            <person name="Zhao S.Y."/>
        </authorList>
    </citation>
    <scope>NUCLEOTIDE SEQUENCE [MRNA]</scope>
    <scope>VARIANT ARG-201</scope>
</reference>
<reference key="4">
    <citation type="submission" date="2004-10" db="EMBL/GenBank/DDBJ databases">
        <title>Cloning of human full-length CDSs in BD Creator(TM) system donor vector.</title>
        <authorList>
            <person name="Kalnine N."/>
            <person name="Chen X."/>
            <person name="Rolfs A."/>
            <person name="Halleck A."/>
            <person name="Hines L."/>
            <person name="Eisenstein S."/>
            <person name="Koundinya M."/>
            <person name="Raphael J."/>
            <person name="Moreira D."/>
            <person name="Kelley T."/>
            <person name="LaBaer J."/>
            <person name="Lin Y."/>
            <person name="Phelan M."/>
            <person name="Farmer A."/>
        </authorList>
    </citation>
    <scope>NUCLEOTIDE SEQUENCE [LARGE SCALE MRNA]</scope>
</reference>
<reference key="5">
    <citation type="journal article" date="2004" name="Nat. Genet.">
        <title>Complete sequencing and characterization of 21,243 full-length human cDNAs.</title>
        <authorList>
            <person name="Ota T."/>
            <person name="Suzuki Y."/>
            <person name="Nishikawa T."/>
            <person name="Otsuki T."/>
            <person name="Sugiyama T."/>
            <person name="Irie R."/>
            <person name="Wakamatsu A."/>
            <person name="Hayashi K."/>
            <person name="Sato H."/>
            <person name="Nagai K."/>
            <person name="Kimura K."/>
            <person name="Makita H."/>
            <person name="Sekine M."/>
            <person name="Obayashi M."/>
            <person name="Nishi T."/>
            <person name="Shibahara T."/>
            <person name="Tanaka T."/>
            <person name="Ishii S."/>
            <person name="Yamamoto J."/>
            <person name="Saito K."/>
            <person name="Kawai Y."/>
            <person name="Isono Y."/>
            <person name="Nakamura Y."/>
            <person name="Nagahari K."/>
            <person name="Murakami K."/>
            <person name="Yasuda T."/>
            <person name="Iwayanagi T."/>
            <person name="Wagatsuma M."/>
            <person name="Shiratori A."/>
            <person name="Sudo H."/>
            <person name="Hosoiri T."/>
            <person name="Kaku Y."/>
            <person name="Kodaira H."/>
            <person name="Kondo H."/>
            <person name="Sugawara M."/>
            <person name="Takahashi M."/>
            <person name="Kanda K."/>
            <person name="Yokoi T."/>
            <person name="Furuya T."/>
            <person name="Kikkawa E."/>
            <person name="Omura Y."/>
            <person name="Abe K."/>
            <person name="Kamihara K."/>
            <person name="Katsuta N."/>
            <person name="Sato K."/>
            <person name="Tanikawa M."/>
            <person name="Yamazaki M."/>
            <person name="Ninomiya K."/>
            <person name="Ishibashi T."/>
            <person name="Yamashita H."/>
            <person name="Murakawa K."/>
            <person name="Fujimori K."/>
            <person name="Tanai H."/>
            <person name="Kimata M."/>
            <person name="Watanabe M."/>
            <person name="Hiraoka S."/>
            <person name="Chiba Y."/>
            <person name="Ishida S."/>
            <person name="Ono Y."/>
            <person name="Takiguchi S."/>
            <person name="Watanabe S."/>
            <person name="Yosida M."/>
            <person name="Hotuta T."/>
            <person name="Kusano J."/>
            <person name="Kanehori K."/>
            <person name="Takahashi-Fujii A."/>
            <person name="Hara H."/>
            <person name="Tanase T.-O."/>
            <person name="Nomura Y."/>
            <person name="Togiya S."/>
            <person name="Komai F."/>
            <person name="Hara R."/>
            <person name="Takeuchi K."/>
            <person name="Arita M."/>
            <person name="Imose N."/>
            <person name="Musashino K."/>
            <person name="Yuuki H."/>
            <person name="Oshima A."/>
            <person name="Sasaki N."/>
            <person name="Aotsuka S."/>
            <person name="Yoshikawa Y."/>
            <person name="Matsunawa H."/>
            <person name="Ichihara T."/>
            <person name="Shiohata N."/>
            <person name="Sano S."/>
            <person name="Moriya S."/>
            <person name="Momiyama H."/>
            <person name="Satoh N."/>
            <person name="Takami S."/>
            <person name="Terashima Y."/>
            <person name="Suzuki O."/>
            <person name="Nakagawa S."/>
            <person name="Senoh A."/>
            <person name="Mizoguchi H."/>
            <person name="Goto Y."/>
            <person name="Shimizu F."/>
            <person name="Wakebe H."/>
            <person name="Hishigaki H."/>
            <person name="Watanabe T."/>
            <person name="Sugiyama A."/>
            <person name="Takemoto M."/>
            <person name="Kawakami B."/>
            <person name="Yamazaki M."/>
            <person name="Watanabe K."/>
            <person name="Kumagai A."/>
            <person name="Itakura S."/>
            <person name="Fukuzumi Y."/>
            <person name="Fujimori Y."/>
            <person name="Komiyama M."/>
            <person name="Tashiro H."/>
            <person name="Tanigami A."/>
            <person name="Fujiwara T."/>
            <person name="Ono T."/>
            <person name="Yamada K."/>
            <person name="Fujii Y."/>
            <person name="Ozaki K."/>
            <person name="Hirao M."/>
            <person name="Ohmori Y."/>
            <person name="Kawabata A."/>
            <person name="Hikiji T."/>
            <person name="Kobatake N."/>
            <person name="Inagaki H."/>
            <person name="Ikema Y."/>
            <person name="Okamoto S."/>
            <person name="Okitani R."/>
            <person name="Kawakami T."/>
            <person name="Noguchi S."/>
            <person name="Itoh T."/>
            <person name="Shigeta K."/>
            <person name="Senba T."/>
            <person name="Matsumura K."/>
            <person name="Nakajima Y."/>
            <person name="Mizuno T."/>
            <person name="Morinaga M."/>
            <person name="Sasaki M."/>
            <person name="Togashi T."/>
            <person name="Oyama M."/>
            <person name="Hata H."/>
            <person name="Watanabe M."/>
            <person name="Komatsu T."/>
            <person name="Mizushima-Sugano J."/>
            <person name="Satoh T."/>
            <person name="Shirai Y."/>
            <person name="Takahashi Y."/>
            <person name="Nakagawa K."/>
            <person name="Okumura K."/>
            <person name="Nagase T."/>
            <person name="Nomura N."/>
            <person name="Kikuchi H."/>
            <person name="Masuho Y."/>
            <person name="Yamashita R."/>
            <person name="Nakai K."/>
            <person name="Yada T."/>
            <person name="Nakamura Y."/>
            <person name="Ohara O."/>
            <person name="Isogai T."/>
            <person name="Sugano S."/>
        </authorList>
    </citation>
    <scope>NUCLEOTIDE SEQUENCE [LARGE SCALE MRNA]</scope>
</reference>
<reference key="6">
    <citation type="journal article" date="2005" name="Nature">
        <title>Generation and annotation of the DNA sequences of human chromosomes 2 and 4.</title>
        <authorList>
            <person name="Hillier L.W."/>
            <person name="Graves T.A."/>
            <person name="Fulton R.S."/>
            <person name="Fulton L.A."/>
            <person name="Pepin K.H."/>
            <person name="Minx P."/>
            <person name="Wagner-McPherson C."/>
            <person name="Layman D."/>
            <person name="Wylie K."/>
            <person name="Sekhon M."/>
            <person name="Becker M.C."/>
            <person name="Fewell G.A."/>
            <person name="Delehaunty K.D."/>
            <person name="Miner T.L."/>
            <person name="Nash W.E."/>
            <person name="Kremitzki C."/>
            <person name="Oddy L."/>
            <person name="Du H."/>
            <person name="Sun H."/>
            <person name="Bradshaw-Cordum H."/>
            <person name="Ali J."/>
            <person name="Carter J."/>
            <person name="Cordes M."/>
            <person name="Harris A."/>
            <person name="Isak A."/>
            <person name="van Brunt A."/>
            <person name="Nguyen C."/>
            <person name="Du F."/>
            <person name="Courtney L."/>
            <person name="Kalicki J."/>
            <person name="Ozersky P."/>
            <person name="Abbott S."/>
            <person name="Armstrong J."/>
            <person name="Belter E.A."/>
            <person name="Caruso L."/>
            <person name="Cedroni M."/>
            <person name="Cotton M."/>
            <person name="Davidson T."/>
            <person name="Desai A."/>
            <person name="Elliott G."/>
            <person name="Erb T."/>
            <person name="Fronick C."/>
            <person name="Gaige T."/>
            <person name="Haakenson W."/>
            <person name="Haglund K."/>
            <person name="Holmes A."/>
            <person name="Harkins R."/>
            <person name="Kim K."/>
            <person name="Kruchowski S.S."/>
            <person name="Strong C.M."/>
            <person name="Grewal N."/>
            <person name="Goyea E."/>
            <person name="Hou S."/>
            <person name="Levy A."/>
            <person name="Martinka S."/>
            <person name="Mead K."/>
            <person name="McLellan M.D."/>
            <person name="Meyer R."/>
            <person name="Randall-Maher J."/>
            <person name="Tomlinson C."/>
            <person name="Dauphin-Kohlberg S."/>
            <person name="Kozlowicz-Reilly A."/>
            <person name="Shah N."/>
            <person name="Swearengen-Shahid S."/>
            <person name="Snider J."/>
            <person name="Strong J.T."/>
            <person name="Thompson J."/>
            <person name="Yoakum M."/>
            <person name="Leonard S."/>
            <person name="Pearman C."/>
            <person name="Trani L."/>
            <person name="Radionenko M."/>
            <person name="Waligorski J.E."/>
            <person name="Wang C."/>
            <person name="Rock S.M."/>
            <person name="Tin-Wollam A.-M."/>
            <person name="Maupin R."/>
            <person name="Latreille P."/>
            <person name="Wendl M.C."/>
            <person name="Yang S.-P."/>
            <person name="Pohl C."/>
            <person name="Wallis J.W."/>
            <person name="Spieth J."/>
            <person name="Bieri T.A."/>
            <person name="Berkowicz N."/>
            <person name="Nelson J.O."/>
            <person name="Osborne J."/>
            <person name="Ding L."/>
            <person name="Meyer R."/>
            <person name="Sabo A."/>
            <person name="Shotland Y."/>
            <person name="Sinha P."/>
            <person name="Wohldmann P.E."/>
            <person name="Cook L.L."/>
            <person name="Hickenbotham M.T."/>
            <person name="Eldred J."/>
            <person name="Williams D."/>
            <person name="Jones T.A."/>
            <person name="She X."/>
            <person name="Ciccarelli F.D."/>
            <person name="Izaurralde E."/>
            <person name="Taylor J."/>
            <person name="Schmutz J."/>
            <person name="Myers R.M."/>
            <person name="Cox D.R."/>
            <person name="Huang X."/>
            <person name="McPherson J.D."/>
            <person name="Mardis E.R."/>
            <person name="Clifton S.W."/>
            <person name="Warren W.C."/>
            <person name="Chinwalla A.T."/>
            <person name="Eddy S.R."/>
            <person name="Marra M.A."/>
            <person name="Ovcharenko I."/>
            <person name="Furey T.S."/>
            <person name="Miller W."/>
            <person name="Eichler E.E."/>
            <person name="Bork P."/>
            <person name="Suyama M."/>
            <person name="Torrents D."/>
            <person name="Waterston R.H."/>
            <person name="Wilson R.K."/>
        </authorList>
    </citation>
    <scope>NUCLEOTIDE SEQUENCE [LARGE SCALE GENOMIC DNA]</scope>
</reference>
<reference key="7">
    <citation type="submission" date="2005-09" db="EMBL/GenBank/DDBJ databases">
        <authorList>
            <person name="Mural R.J."/>
            <person name="Istrail S."/>
            <person name="Sutton G.G."/>
            <person name="Florea L."/>
            <person name="Halpern A.L."/>
            <person name="Mobarry C.M."/>
            <person name="Lippert R."/>
            <person name="Walenz B."/>
            <person name="Shatkay H."/>
            <person name="Dew I."/>
            <person name="Miller J.R."/>
            <person name="Flanigan M.J."/>
            <person name="Edwards N.J."/>
            <person name="Bolanos R."/>
            <person name="Fasulo D."/>
            <person name="Halldorsson B.V."/>
            <person name="Hannenhalli S."/>
            <person name="Turner R."/>
            <person name="Yooseph S."/>
            <person name="Lu F."/>
            <person name="Nusskern D.R."/>
            <person name="Shue B.C."/>
            <person name="Zheng X.H."/>
            <person name="Zhong F."/>
            <person name="Delcher A.L."/>
            <person name="Huson D.H."/>
            <person name="Kravitz S.A."/>
            <person name="Mouchard L."/>
            <person name="Reinert K."/>
            <person name="Remington K.A."/>
            <person name="Clark A.G."/>
            <person name="Waterman M.S."/>
            <person name="Eichler E.E."/>
            <person name="Adams M.D."/>
            <person name="Hunkapiller M.W."/>
            <person name="Myers E.W."/>
            <person name="Venter J.C."/>
        </authorList>
    </citation>
    <scope>NUCLEOTIDE SEQUENCE [LARGE SCALE GENOMIC DNA]</scope>
</reference>
<reference key="8">
    <citation type="journal article" date="2004" name="Genome Res.">
        <title>The status, quality, and expansion of the NIH full-length cDNA project: the Mammalian Gene Collection (MGC).</title>
        <authorList>
            <consortium name="The MGC Project Team"/>
        </authorList>
    </citation>
    <scope>NUCLEOTIDE SEQUENCE [LARGE SCALE MRNA]</scope>
    <source>
        <tissue>Lung</tissue>
        <tissue>PNS</tissue>
    </source>
</reference>
<reference key="9">
    <citation type="journal article" date="2004" name="J. Cell Biol.">
        <title>Ubiquitin charging of human class III ubiquitin-conjugating enzymes triggers their nuclear import.</title>
        <authorList>
            <person name="Plafker S.M."/>
            <person name="Plafker K.S."/>
            <person name="Weissman A.M."/>
            <person name="Macara I.G."/>
        </authorList>
    </citation>
    <scope>SUBCELLULAR LOCATION</scope>
</reference>
<reference key="10">
    <citation type="journal article" date="2009" name="Anal. Chem.">
        <title>Lys-N and trypsin cover complementary parts of the phosphoproteome in a refined SCX-based approach.</title>
        <authorList>
            <person name="Gauci S."/>
            <person name="Helbig A.O."/>
            <person name="Slijper M."/>
            <person name="Krijgsveld J."/>
            <person name="Heck A.J."/>
            <person name="Mohammed S."/>
        </authorList>
    </citation>
    <scope>ACETYLATION [LARGE SCALE ANALYSIS] AT SER-2</scope>
    <scope>CLEAVAGE OF INITIATOR METHIONINE [LARGE SCALE ANALYSIS]</scope>
    <scope>IDENTIFICATION BY MASS SPECTROMETRY [LARGE SCALE ANALYSIS]</scope>
</reference>
<reference key="11">
    <citation type="journal article" date="2010" name="J. Biol. Chem.">
        <title>The E2 ubiquitin-conjugating enzymes direct polyubiquitination to preferred lysines.</title>
        <authorList>
            <person name="David Y."/>
            <person name="Ziv T."/>
            <person name="Admon A."/>
            <person name="Navon A."/>
        </authorList>
    </citation>
    <scope>FUNCTION</scope>
    <scope>CATALYTIC ACTIVITY</scope>
</reference>
<reference key="12">
    <citation type="journal article" date="2011" name="BMC Syst. Biol.">
        <title>Initial characterization of the human central proteome.</title>
        <authorList>
            <person name="Burkard T.R."/>
            <person name="Planyavsky M."/>
            <person name="Kaupe I."/>
            <person name="Breitwieser F.P."/>
            <person name="Buerckstuemmer T."/>
            <person name="Bennett K.L."/>
            <person name="Superti-Furga G."/>
            <person name="Colinge J."/>
        </authorList>
    </citation>
    <scope>IDENTIFICATION BY MASS SPECTROMETRY [LARGE SCALE ANALYSIS]</scope>
</reference>
<reference key="13">
    <citation type="journal article" date="2014" name="J. Proteomics">
        <title>An enzyme assisted RP-RPLC approach for in-depth analysis of human liver phosphoproteome.</title>
        <authorList>
            <person name="Bian Y."/>
            <person name="Song C."/>
            <person name="Cheng K."/>
            <person name="Dong M."/>
            <person name="Wang F."/>
            <person name="Huang J."/>
            <person name="Sun D."/>
            <person name="Wang L."/>
            <person name="Ye M."/>
            <person name="Zou H."/>
        </authorList>
    </citation>
    <scope>PHOSPHORYLATION [LARGE SCALE ANALYSIS] AT SER-8</scope>
    <scope>IDENTIFICATION BY MASS SPECTROMETRY [LARGE SCALE ANALYSIS]</scope>
    <source>
        <tissue>Liver</tissue>
    </source>
</reference>
<reference key="14">
    <citation type="journal article" date="2016" name="Mol. Cell">
        <title>E3-Independent Constitutive Monoubiquitination Complements Histone Methyltransferase Activity of SETDB1.</title>
        <authorList>
            <person name="Sun L."/>
            <person name="Fang J."/>
        </authorList>
    </citation>
    <scope>FUNCTION</scope>
</reference>
<gene>
    <name evidence="11" type="primary">UBE2E3</name>
    <name type="synonym">UBCE4</name>
    <name type="synonym">UBCH9</name>
</gene>
<feature type="initiator methionine" description="Removed" evidence="12">
    <location>
        <position position="1"/>
    </location>
</feature>
<feature type="chain" id="PRO_0000082474" description="Ubiquitin-conjugating enzyme E2 E3">
    <location>
        <begin position="2"/>
        <end position="207"/>
    </location>
</feature>
<feature type="domain" description="UBC core" evidence="2">
    <location>
        <begin position="61"/>
        <end position="207"/>
    </location>
</feature>
<feature type="region of interest" description="Disordered" evidence="4">
    <location>
        <begin position="1"/>
        <end position="63"/>
    </location>
</feature>
<feature type="compositionally biased region" description="Basic and acidic residues" evidence="4">
    <location>
        <begin position="1"/>
        <end position="10"/>
    </location>
</feature>
<feature type="compositionally biased region" description="Low complexity" evidence="4">
    <location>
        <begin position="50"/>
        <end position="63"/>
    </location>
</feature>
<feature type="active site" description="Glycyl thioester intermediate" evidence="2">
    <location>
        <position position="145"/>
    </location>
</feature>
<feature type="modified residue" description="N-acetylserine" evidence="12">
    <location>
        <position position="2"/>
    </location>
</feature>
<feature type="modified residue" description="Phosphoserine" evidence="13">
    <location>
        <position position="8"/>
    </location>
</feature>
<feature type="sequence variant" id="VAR_023392" description="In dbSNP:rs2368192." evidence="9">
    <original>W</original>
    <variation>R</variation>
    <location>
        <position position="201"/>
    </location>
</feature>
<feature type="mutagenesis site" description="Loss of activity." evidence="5">
    <original>C</original>
    <variation>S</variation>
    <location>
        <position position="145"/>
    </location>
</feature>
<feature type="sequence conflict" description="In Ref. 3; AAP97266." evidence="10" ref="3">
    <original>R</original>
    <variation>K</variation>
    <location>
        <position position="65"/>
    </location>
</feature>
<feature type="sequence conflict" description="In Ref. 3; AAP97266." evidence="10" ref="3">
    <original>Y</original>
    <variation>C</variation>
    <location>
        <position position="91"/>
    </location>
</feature>
<feature type="sequence conflict" description="In Ref. 3; AAP97266." evidence="10" ref="3">
    <original>P</original>
    <variation>L</variation>
    <location>
        <position position="101"/>
    </location>
</feature>
<feature type="sequence conflict" description="In Ref. 3; AAP97266." evidence="10" ref="3">
    <original>Y</original>
    <variation>D</variation>
    <location>
        <position position="134"/>
    </location>
</feature>
<feature type="sequence conflict" description="In Ref. 3; AAP97266." evidence="10" ref="3">
    <original>I</original>
    <variation>V</variation>
    <location>
        <position position="159"/>
    </location>
</feature>
<feature type="sequence conflict" description="In Ref. 3; AAP97266." evidence="10" ref="3">
    <original>T</original>
    <variation>M</variation>
    <location>
        <position position="171"/>
    </location>
</feature>
<feature type="sequence conflict" description="In Ref. 3; AAP97266." evidence="10" ref="3">
    <original>A</original>
    <variation>V</variation>
    <location>
        <position position="176"/>
    </location>
</feature>
<keyword id="KW-0007">Acetylation</keyword>
<keyword id="KW-0067">ATP-binding</keyword>
<keyword id="KW-0963">Cytoplasm</keyword>
<keyword id="KW-0341">Growth regulation</keyword>
<keyword id="KW-0547">Nucleotide-binding</keyword>
<keyword id="KW-0539">Nucleus</keyword>
<keyword id="KW-0597">Phosphoprotein</keyword>
<keyword id="KW-1267">Proteomics identification</keyword>
<keyword id="KW-1185">Reference proteome</keyword>
<keyword id="KW-0808">Transferase</keyword>
<keyword id="KW-0833">Ubl conjugation pathway</keyword>
<sequence>MSSDRQRSDDESPSTSSGSSDADQRDPAAPEPEEQEERKPSATQQKKNTKLSSKTTAKLSTSAKRIQKELAEITLDPPPNCSAGPKGDNIYEWRSTILGPPGSVYEGGVFFLDITFSSDYPFKPPKVTFRTRIYHCNINSQGVICLDILKDNWSPALTISKVLLSICSLLTDCNPADPLVGSIATQYLTNRAEHDRIARQWTKRYAT</sequence>
<accession>Q969T4</accession>
<accession>B2RAD6</accession>
<accession>D3DPG3</accession>
<accession>Q5U0R7</accession>
<accession>Q7Z4W4</accession>